<evidence type="ECO:0000250" key="1">
    <source>
        <dbReference type="UniProtKB" id="P03901"/>
    </source>
</evidence>
<evidence type="ECO:0000250" key="2">
    <source>
        <dbReference type="UniProtKB" id="P03902"/>
    </source>
</evidence>
<evidence type="ECO:0000255" key="3"/>
<evidence type="ECO:0000305" key="4"/>
<gene>
    <name type="primary">MT-ND4L</name>
    <name type="synonym">MTND4L</name>
    <name type="synonym">NADH4L</name>
    <name type="synonym">ND4L</name>
</gene>
<name>NU4LM_PANHO</name>
<protein>
    <recommendedName>
        <fullName>NADH-ubiquinone oxidoreductase chain 4L</fullName>
        <ecNumber>7.1.1.2</ecNumber>
    </recommendedName>
    <alternativeName>
        <fullName>NADH dehydrogenase subunit 4L</fullName>
    </alternativeName>
</protein>
<accession>Q3LR84</accession>
<feature type="chain" id="PRO_0000275085" description="NADH-ubiquinone oxidoreductase chain 4L">
    <location>
        <begin position="1"/>
        <end position="98"/>
    </location>
</feature>
<feature type="transmembrane region" description="Helical" evidence="3">
    <location>
        <begin position="1"/>
        <end position="21"/>
    </location>
</feature>
<feature type="transmembrane region" description="Helical" evidence="3">
    <location>
        <begin position="29"/>
        <end position="49"/>
    </location>
</feature>
<feature type="transmembrane region" description="Helical" evidence="3">
    <location>
        <begin position="61"/>
        <end position="81"/>
    </location>
</feature>
<comment type="function">
    <text evidence="1">Core subunit of the mitochondrial membrane respiratory chain NADH dehydrogenase (Complex I) which catalyzes electron transfer from NADH through the respiratory chain, using ubiquinone as an electron acceptor. Part of the enzyme membrane arm which is embedded in the lipid bilayer and involved in proton translocation.</text>
</comment>
<comment type="catalytic activity">
    <reaction evidence="1">
        <text>a ubiquinone + NADH + 5 H(+)(in) = a ubiquinol + NAD(+) + 4 H(+)(out)</text>
        <dbReference type="Rhea" id="RHEA:29091"/>
        <dbReference type="Rhea" id="RHEA-COMP:9565"/>
        <dbReference type="Rhea" id="RHEA-COMP:9566"/>
        <dbReference type="ChEBI" id="CHEBI:15378"/>
        <dbReference type="ChEBI" id="CHEBI:16389"/>
        <dbReference type="ChEBI" id="CHEBI:17976"/>
        <dbReference type="ChEBI" id="CHEBI:57540"/>
        <dbReference type="ChEBI" id="CHEBI:57945"/>
        <dbReference type="EC" id="7.1.1.2"/>
    </reaction>
    <physiologicalReaction direction="left-to-right" evidence="1">
        <dbReference type="Rhea" id="RHEA:29092"/>
    </physiologicalReaction>
</comment>
<comment type="subunit">
    <text evidence="2">Core subunit of respiratory chain NADH dehydrogenase (Complex I) which is composed of 45 different subunits.</text>
</comment>
<comment type="subcellular location">
    <subcellularLocation>
        <location evidence="2">Mitochondrion inner membrane</location>
        <topology evidence="3">Multi-pass membrane protein</topology>
    </subcellularLocation>
</comment>
<comment type="similarity">
    <text evidence="4">Belongs to the complex I subunit 4L family.</text>
</comment>
<dbReference type="EC" id="7.1.1.2"/>
<dbReference type="EMBL" id="DQ191826">
    <property type="protein sequence ID" value="ABA03265.1"/>
    <property type="molecule type" value="Genomic_DNA"/>
</dbReference>
<dbReference type="RefSeq" id="YP_337832.1">
    <property type="nucleotide sequence ID" value="NC_007441.1"/>
</dbReference>
<dbReference type="SMR" id="Q3LR84"/>
<dbReference type="GeneID" id="3703625"/>
<dbReference type="CTD" id="4539"/>
<dbReference type="GO" id="GO:0005743">
    <property type="term" value="C:mitochondrial inner membrane"/>
    <property type="evidence" value="ECO:0000250"/>
    <property type="project" value="UniProtKB"/>
</dbReference>
<dbReference type="GO" id="GO:0045271">
    <property type="term" value="C:respiratory chain complex I"/>
    <property type="evidence" value="ECO:0000250"/>
    <property type="project" value="UniProtKB"/>
</dbReference>
<dbReference type="GO" id="GO:0008137">
    <property type="term" value="F:NADH dehydrogenase (ubiquinone) activity"/>
    <property type="evidence" value="ECO:0000250"/>
    <property type="project" value="UniProtKB"/>
</dbReference>
<dbReference type="GO" id="GO:0042773">
    <property type="term" value="P:ATP synthesis coupled electron transport"/>
    <property type="evidence" value="ECO:0007669"/>
    <property type="project" value="InterPro"/>
</dbReference>
<dbReference type="FunFam" id="1.10.287.3510:FF:000002">
    <property type="entry name" value="NADH-ubiquinone oxidoreductase chain 4L"/>
    <property type="match status" value="1"/>
</dbReference>
<dbReference type="Gene3D" id="1.10.287.3510">
    <property type="match status" value="1"/>
</dbReference>
<dbReference type="InterPro" id="IPR001133">
    <property type="entry name" value="NADH_UbQ_OxRdtase_chain4L/K"/>
</dbReference>
<dbReference type="InterPro" id="IPR039428">
    <property type="entry name" value="NUOK/Mnh_C1-like"/>
</dbReference>
<dbReference type="PANTHER" id="PTHR11434:SF0">
    <property type="entry name" value="NADH-UBIQUINONE OXIDOREDUCTASE CHAIN 4L"/>
    <property type="match status" value="1"/>
</dbReference>
<dbReference type="PANTHER" id="PTHR11434">
    <property type="entry name" value="NADH-UBIQUINONE OXIDOREDUCTASE SUBUNIT ND4L"/>
    <property type="match status" value="1"/>
</dbReference>
<dbReference type="Pfam" id="PF00420">
    <property type="entry name" value="Oxidored_q2"/>
    <property type="match status" value="1"/>
</dbReference>
<geneLocation type="mitochondrion"/>
<organism>
    <name type="scientific">Pantholops hodgsonii</name>
    <name type="common">Chiru</name>
    <name type="synonym">Tibetan antelope</name>
    <dbReference type="NCBI Taxonomy" id="59538"/>
    <lineage>
        <taxon>Eukaryota</taxon>
        <taxon>Metazoa</taxon>
        <taxon>Chordata</taxon>
        <taxon>Craniata</taxon>
        <taxon>Vertebrata</taxon>
        <taxon>Euteleostomi</taxon>
        <taxon>Mammalia</taxon>
        <taxon>Eutheria</taxon>
        <taxon>Laurasiatheria</taxon>
        <taxon>Artiodactyla</taxon>
        <taxon>Ruminantia</taxon>
        <taxon>Pecora</taxon>
        <taxon>Bovidae</taxon>
        <taxon>Antilopinae</taxon>
        <taxon>Pantholops</taxon>
    </lineage>
</organism>
<reference key="1">
    <citation type="journal article" date="2005" name="Genomics Proteomics Bioinformatics">
        <title>A mitochondrial genome sequence of the Tibetan antelope (Pantholops hodgsonii).</title>
        <authorList>
            <person name="Xu S.Q."/>
            <person name="Yang Y.Z."/>
            <person name="Zhou J."/>
            <person name="Jing G.E."/>
            <person name="Chen Y.T."/>
            <person name="Wang J."/>
            <person name="Yang H.M."/>
            <person name="Wang J."/>
            <person name="Yu J."/>
            <person name="Zheng X.G."/>
            <person name="Ge R.L."/>
        </authorList>
    </citation>
    <scope>NUCLEOTIDE SEQUENCE [GENOMIC DNA]</scope>
</reference>
<sequence>MSLVYMNIMTAFAVSLTGLLMYRSHLMSSLLCLEGMMLSLFVMATLMILNSHFTLASMMPIILLVFAACEAALGLSLLVMVSNTYGTDYVQNLNLLQC</sequence>
<keyword id="KW-0249">Electron transport</keyword>
<keyword id="KW-0472">Membrane</keyword>
<keyword id="KW-0496">Mitochondrion</keyword>
<keyword id="KW-0999">Mitochondrion inner membrane</keyword>
<keyword id="KW-0520">NAD</keyword>
<keyword id="KW-0679">Respiratory chain</keyword>
<keyword id="KW-1278">Translocase</keyword>
<keyword id="KW-0812">Transmembrane</keyword>
<keyword id="KW-1133">Transmembrane helix</keyword>
<keyword id="KW-0813">Transport</keyword>
<keyword id="KW-0830">Ubiquinone</keyword>
<proteinExistence type="inferred from homology"/>